<feature type="chain" id="PRO_0000287202" description="Haloacid dehalogenase-like hydrolase domain-containing protein 2">
    <location>
        <begin position="1"/>
        <end position="259"/>
    </location>
</feature>
<feature type="coiled-coil region" evidence="3">
    <location>
        <begin position="47"/>
        <end position="71"/>
    </location>
</feature>
<feature type="binding site" evidence="1">
    <location>
        <begin position="13"/>
        <end position="15"/>
    </location>
    <ligand>
        <name>substrate</name>
    </ligand>
</feature>
<feature type="binding site" evidence="1">
    <location>
        <position position="13"/>
    </location>
    <ligand>
        <name>Mg(2+)</name>
        <dbReference type="ChEBI" id="CHEBI:18420"/>
    </ligand>
</feature>
<feature type="binding site" evidence="1">
    <location>
        <position position="15"/>
    </location>
    <ligand>
        <name>Mg(2+)</name>
        <dbReference type="ChEBI" id="CHEBI:18420"/>
    </ligand>
</feature>
<feature type="binding site" evidence="1">
    <location>
        <begin position="46"/>
        <end position="47"/>
    </location>
    <ligand>
        <name>substrate</name>
    </ligand>
</feature>
<feature type="binding site" evidence="1">
    <location>
        <position position="179"/>
    </location>
    <ligand>
        <name>substrate</name>
    </ligand>
</feature>
<feature type="binding site" evidence="1">
    <location>
        <position position="204"/>
    </location>
    <ligand>
        <name>Mg(2+)</name>
        <dbReference type="ChEBI" id="CHEBI:18420"/>
    </ligand>
</feature>
<feature type="modified residue" description="N6-succinyllysine" evidence="2">
    <location>
        <position position="50"/>
    </location>
</feature>
<sequence>MATRRALKAVLVDLSGTLHIEDAAVPGAQEALKRLRATSVMVRFVTNTTKESKQDLLERLKKLEFDISEDEIFTSLTAARNLVEQKQVRPMLLVDDRALPDFKGIQTSDPNAVVIGLAPEHFHYQILNQAFRLLLDGAPLIAIHKARYYKRKDGLALGPGPFVTALEYATDTKATVVGKPEKTFFLEALRGTGCEPEETVMIGDDCRDDVGGAQNAGMRGILVKTGKYRAADEDKINPAPYLTCESFPHAVDHILQHLL</sequence>
<comment type="cofactor">
    <cofactor evidence="1">
        <name>Mg(2+)</name>
        <dbReference type="ChEBI" id="CHEBI:18420"/>
    </cofactor>
    <text evidence="1">Binds 1 Mg(2+) ion per subunit.</text>
</comment>
<comment type="similarity">
    <text evidence="4">Belongs to the HAD-like hydrolase superfamily.</text>
</comment>
<organism>
    <name type="scientific">Bos taurus</name>
    <name type="common">Bovine</name>
    <dbReference type="NCBI Taxonomy" id="9913"/>
    <lineage>
        <taxon>Eukaryota</taxon>
        <taxon>Metazoa</taxon>
        <taxon>Chordata</taxon>
        <taxon>Craniata</taxon>
        <taxon>Vertebrata</taxon>
        <taxon>Euteleostomi</taxon>
        <taxon>Mammalia</taxon>
        <taxon>Eutheria</taxon>
        <taxon>Laurasiatheria</taxon>
        <taxon>Artiodactyla</taxon>
        <taxon>Ruminantia</taxon>
        <taxon>Pecora</taxon>
        <taxon>Bovidae</taxon>
        <taxon>Bovinae</taxon>
        <taxon>Bos</taxon>
    </lineage>
</organism>
<evidence type="ECO:0000250" key="1"/>
<evidence type="ECO:0000250" key="2">
    <source>
        <dbReference type="UniProtKB" id="Q3UGR5"/>
    </source>
</evidence>
<evidence type="ECO:0000255" key="3"/>
<evidence type="ECO:0000305" key="4"/>
<protein>
    <recommendedName>
        <fullName>Haloacid dehalogenase-like hydrolase domain-containing protein 2</fullName>
    </recommendedName>
</protein>
<accession>Q3ZCH9</accession>
<gene>
    <name type="primary">HDHD2</name>
</gene>
<dbReference type="EMBL" id="BC102232">
    <property type="protein sequence ID" value="AAI02233.1"/>
    <property type="molecule type" value="mRNA"/>
</dbReference>
<dbReference type="RefSeq" id="NP_001030194.1">
    <property type="nucleotide sequence ID" value="NM_001035022.1"/>
</dbReference>
<dbReference type="RefSeq" id="XP_010817297.1">
    <property type="nucleotide sequence ID" value="XM_010818995.1"/>
</dbReference>
<dbReference type="RefSeq" id="XP_015324658.1">
    <property type="nucleotide sequence ID" value="XM_015469172.1"/>
</dbReference>
<dbReference type="RefSeq" id="XP_024839960.1">
    <property type="nucleotide sequence ID" value="XM_024984192.2"/>
</dbReference>
<dbReference type="RefSeq" id="XP_024839961.1">
    <property type="nucleotide sequence ID" value="XM_024984193.2"/>
</dbReference>
<dbReference type="RefSeq" id="XP_024839962.1">
    <property type="nucleotide sequence ID" value="XM_024984194.2"/>
</dbReference>
<dbReference type="SMR" id="Q3ZCH9"/>
<dbReference type="FunCoup" id="Q3ZCH9">
    <property type="interactions" value="2347"/>
</dbReference>
<dbReference type="STRING" id="9913.ENSBTAP00000023026"/>
<dbReference type="PaxDb" id="9913-ENSBTAP00000023026"/>
<dbReference type="PeptideAtlas" id="Q3ZCH9"/>
<dbReference type="Ensembl" id="ENSBTAT00000023026.5">
    <property type="protein sequence ID" value="ENSBTAP00000023026.5"/>
    <property type="gene ID" value="ENSBTAG00000011893.6"/>
</dbReference>
<dbReference type="GeneID" id="505403"/>
<dbReference type="KEGG" id="bta:505403"/>
<dbReference type="CTD" id="84064"/>
<dbReference type="VEuPathDB" id="HostDB:ENSBTAG00000011893"/>
<dbReference type="VGNC" id="VGNC:108122">
    <property type="gene designation" value="HDHD2"/>
</dbReference>
<dbReference type="eggNOG" id="KOG3040">
    <property type="taxonomic scope" value="Eukaryota"/>
</dbReference>
<dbReference type="GeneTree" id="ENSGT00940000155805"/>
<dbReference type="HOGENOM" id="CLU_043473_4_3_1"/>
<dbReference type="InParanoid" id="Q3ZCH9"/>
<dbReference type="OMA" id="RKPIESW"/>
<dbReference type="OrthoDB" id="426235at2759"/>
<dbReference type="Proteomes" id="UP000009136">
    <property type="component" value="Chromosome 24"/>
</dbReference>
<dbReference type="Bgee" id="ENSBTAG00000011893">
    <property type="expression patterns" value="Expressed in oocyte and 107 other cell types or tissues"/>
</dbReference>
<dbReference type="GO" id="GO:0005737">
    <property type="term" value="C:cytoplasm"/>
    <property type="evidence" value="ECO:0000318"/>
    <property type="project" value="GO_Central"/>
</dbReference>
<dbReference type="GO" id="GO:0019899">
    <property type="term" value="F:enzyme binding"/>
    <property type="evidence" value="ECO:0000250"/>
    <property type="project" value="CAFA"/>
</dbReference>
<dbReference type="GO" id="GO:0046872">
    <property type="term" value="F:metal ion binding"/>
    <property type="evidence" value="ECO:0007669"/>
    <property type="project" value="UniProtKB-KW"/>
</dbReference>
<dbReference type="GO" id="GO:0016791">
    <property type="term" value="F:phosphatase activity"/>
    <property type="evidence" value="ECO:0000318"/>
    <property type="project" value="GO_Central"/>
</dbReference>
<dbReference type="CDD" id="cd07509">
    <property type="entry name" value="HAD_PPase"/>
    <property type="match status" value="1"/>
</dbReference>
<dbReference type="FunFam" id="3.40.50.1000:FF:000450">
    <property type="match status" value="1"/>
</dbReference>
<dbReference type="FunFam" id="3.40.50.1000:FF:000060">
    <property type="entry name" value="Haloacid dehalogenase-like hydrolase domain-containing protein 2"/>
    <property type="match status" value="1"/>
</dbReference>
<dbReference type="Gene3D" id="3.40.50.1000">
    <property type="entry name" value="HAD superfamily/HAD-like"/>
    <property type="match status" value="2"/>
</dbReference>
<dbReference type="InterPro" id="IPR036412">
    <property type="entry name" value="HAD-like_sf"/>
</dbReference>
<dbReference type="InterPro" id="IPR006357">
    <property type="entry name" value="HAD-SF_hydro_IIA"/>
</dbReference>
<dbReference type="InterPro" id="IPR023214">
    <property type="entry name" value="HAD_sf"/>
</dbReference>
<dbReference type="InterPro" id="IPR006355">
    <property type="entry name" value="LHPP/HDHD2"/>
</dbReference>
<dbReference type="NCBIfam" id="TIGR01460">
    <property type="entry name" value="HAD-SF-IIA"/>
    <property type="match status" value="1"/>
</dbReference>
<dbReference type="NCBIfam" id="TIGR01458">
    <property type="entry name" value="HAD-SF-IIA-hyp3"/>
    <property type="match status" value="1"/>
</dbReference>
<dbReference type="PANTHER" id="PTHR19288">
    <property type="entry name" value="4-NITROPHENYLPHOSPHATASE-RELATED"/>
    <property type="match status" value="1"/>
</dbReference>
<dbReference type="PANTHER" id="PTHR19288:SF46">
    <property type="entry name" value="HALOACID DEHALOGENASE-LIKE HYDROLASE DOMAIN-CONTAINING PROTEIN 2"/>
    <property type="match status" value="1"/>
</dbReference>
<dbReference type="Pfam" id="PF13344">
    <property type="entry name" value="Hydrolase_6"/>
    <property type="match status" value="1"/>
</dbReference>
<dbReference type="Pfam" id="PF13242">
    <property type="entry name" value="Hydrolase_like"/>
    <property type="match status" value="1"/>
</dbReference>
<dbReference type="SFLD" id="SFLDG01139">
    <property type="entry name" value="C2.A:_Pyridoxal_Phosphate_Phos"/>
    <property type="match status" value="1"/>
</dbReference>
<dbReference type="SFLD" id="SFLDS00003">
    <property type="entry name" value="Haloacid_Dehalogenase"/>
    <property type="match status" value="1"/>
</dbReference>
<dbReference type="SUPFAM" id="SSF56784">
    <property type="entry name" value="HAD-like"/>
    <property type="match status" value="1"/>
</dbReference>
<name>HDHD2_BOVIN</name>
<reference key="1">
    <citation type="submission" date="2005-08" db="EMBL/GenBank/DDBJ databases">
        <authorList>
            <consortium name="NIH - Mammalian Gene Collection (MGC) project"/>
        </authorList>
    </citation>
    <scope>NUCLEOTIDE SEQUENCE [LARGE SCALE MRNA]</scope>
    <source>
        <strain>Crossbred X Angus</strain>
        <tissue>Ileum</tissue>
    </source>
</reference>
<keyword id="KW-0175">Coiled coil</keyword>
<keyword id="KW-0460">Magnesium</keyword>
<keyword id="KW-0479">Metal-binding</keyword>
<keyword id="KW-1185">Reference proteome</keyword>
<proteinExistence type="evidence at transcript level"/>